<feature type="chain" id="PRO_0000083375" description="2-(3-amino-3-carboxypropyl)histidine synthase subunit 1">
    <location>
        <begin position="1"/>
        <end position="462"/>
    </location>
</feature>
<feature type="region of interest" description="Disordered" evidence="3">
    <location>
        <begin position="1"/>
        <end position="87"/>
    </location>
</feature>
<feature type="compositionally biased region" description="Polar residues" evidence="3">
    <location>
        <begin position="35"/>
        <end position="44"/>
    </location>
</feature>
<feature type="binding site" evidence="1">
    <location>
        <position position="173"/>
    </location>
    <ligand>
        <name>[4Fe-4S] cluster</name>
        <dbReference type="ChEBI" id="CHEBI:49883"/>
    </ligand>
</feature>
<feature type="binding site" evidence="1">
    <location>
        <position position="276"/>
    </location>
    <ligand>
        <name>[4Fe-4S] cluster</name>
        <dbReference type="ChEBI" id="CHEBI:49883"/>
    </ligand>
</feature>
<feature type="binding site" evidence="1">
    <location>
        <position position="406"/>
    </location>
    <ligand>
        <name>[4Fe-4S] cluster</name>
        <dbReference type="ChEBI" id="CHEBI:49883"/>
    </ligand>
</feature>
<gene>
    <name type="primary">DPH1</name>
    <name type="ORF">FGRRES_00636</name>
    <name type="ORF">FGSG_00636</name>
</gene>
<organism>
    <name type="scientific">Gibberella zeae (strain ATCC MYA-4620 / CBS 123657 / FGSC 9075 / NRRL 31084 / PH-1)</name>
    <name type="common">Wheat head blight fungus</name>
    <name type="synonym">Fusarium graminearum</name>
    <dbReference type="NCBI Taxonomy" id="229533"/>
    <lineage>
        <taxon>Eukaryota</taxon>
        <taxon>Fungi</taxon>
        <taxon>Dikarya</taxon>
        <taxon>Ascomycota</taxon>
        <taxon>Pezizomycotina</taxon>
        <taxon>Sordariomycetes</taxon>
        <taxon>Hypocreomycetidae</taxon>
        <taxon>Hypocreales</taxon>
        <taxon>Nectriaceae</taxon>
        <taxon>Fusarium</taxon>
    </lineage>
</organism>
<sequence length="462" mass="50483">MEEDRRQTDLGTAADIEEAQLAQASPSPAIENETESAAQTQNGATPLKQPKKRFVGRRAATEAAAKNGSSGATGESGAVATAKPRRAPRLLNQVPKEILENPDLKAAISLLPANYNFEIPKTIHRIQTSGSKRVALQMPEGLLLFATTISDILTQFCPGIETLIMGDVTYGACCIDDYTARALGCDLLVHYAHSCLIPVDVTTIKTLYVFVDISIDATHLLASLEHNFASGKTIAVVGTIQFNATIHGVKSSLERGGFRVLVPQIAPLSKGEILGCTSPRLTEDDKIDLILYLGDGRFHLESIMIHNPTIPAYRYDPYSRKLTRETYGHEEMQSLRRTAIHSARSARKWGLILGALGRQGNPHTLGLIEKELKARGIPIVHLLLSEIFPGKLALMSDIECWVQVACPRLSIDWGYAFSRPLLTPYEALVALGEKKDWGDGVYPMDYYGKDGLGRTRPLQIAS</sequence>
<keyword id="KW-0963">Cytoplasm</keyword>
<keyword id="KW-0408">Iron</keyword>
<keyword id="KW-0411">Iron-sulfur</keyword>
<keyword id="KW-0479">Metal-binding</keyword>
<keyword id="KW-1185">Reference proteome</keyword>
<keyword id="KW-0949">S-adenosyl-L-methionine</keyword>
<keyword id="KW-0808">Transferase</keyword>
<comment type="function">
    <text evidence="2">Catalyzes the first step of diphthamide biosynthesis, a post-translational modification of histidine which occurs in elongation factor 2. DPH1 and DPH2 transfer a 3-amino-3-carboxypropyl (ACP) group from S-adenosyl-L-methionine (SAM) to a histidine residue, the reaction is assisted by a reduction system comprising DPH3 and a NADH-dependent reductase, predominantly CBR1.</text>
</comment>
<comment type="catalytic activity">
    <reaction evidence="2">
        <text>L-histidyl-[translation elongation factor 2] + S-adenosyl-L-methionine = 2-[(3S)-amino-3-carboxypropyl]-L-histidyl-[translation elongation factor 2] + S-methyl-5'-thioadenosine + H(+)</text>
        <dbReference type="Rhea" id="RHEA:36783"/>
        <dbReference type="Rhea" id="RHEA-COMP:9748"/>
        <dbReference type="Rhea" id="RHEA-COMP:9749"/>
        <dbReference type="ChEBI" id="CHEBI:15378"/>
        <dbReference type="ChEBI" id="CHEBI:17509"/>
        <dbReference type="ChEBI" id="CHEBI:29979"/>
        <dbReference type="ChEBI" id="CHEBI:59789"/>
        <dbReference type="ChEBI" id="CHEBI:73995"/>
        <dbReference type="EC" id="2.5.1.108"/>
    </reaction>
</comment>
<comment type="cofactor">
    <cofactor evidence="2">
        <name>[4Fe-4S] cluster</name>
        <dbReference type="ChEBI" id="CHEBI:49883"/>
    </cofactor>
    <text evidence="2">Binds 1 [4Fe-4S] cluster per subunit. The cluster is coordinated with 3 cysteines and an exchangeable S-adenosyl-L-methionine.</text>
</comment>
<comment type="pathway">
    <text>Protein modification; peptidyl-diphthamide biosynthesis.</text>
</comment>
<comment type="subunit">
    <text evidence="2">Component of the 2-(3-amino-3-carboxypropyl)histidine synthase complex composed of DPH1, DPH2, DPH3 and a NADH-dependent reductase, predominantly CBR1.</text>
</comment>
<comment type="subcellular location">
    <subcellularLocation>
        <location evidence="2">Cytoplasm</location>
    </subcellularLocation>
</comment>
<comment type="similarity">
    <text evidence="4">Belongs to the DPH1/DPH2 family. DPH1 subfamily.</text>
</comment>
<accession>Q4IQ72</accession>
<accession>A0A098D113</accession>
<accession>A0A0E0RMX9</accession>
<accession>V6QU42</accession>
<protein>
    <recommendedName>
        <fullName evidence="4">2-(3-amino-3-carboxypropyl)histidine synthase subunit 1</fullName>
        <ecNumber evidence="2">2.5.1.108</ecNumber>
    </recommendedName>
    <alternativeName>
        <fullName>Diphthamide biosynthesis protein 1</fullName>
    </alternativeName>
    <alternativeName>
        <fullName evidence="4">Diphtheria toxin resistance protein 1</fullName>
    </alternativeName>
    <alternativeName>
        <fullName evidence="4">S-adenosyl-L-methionine:L-histidine 3-amino-3-carboxypropyltransferase 1</fullName>
    </alternativeName>
</protein>
<evidence type="ECO:0000250" key="1">
    <source>
        <dbReference type="UniProtKB" id="O58832"/>
    </source>
</evidence>
<evidence type="ECO:0000250" key="2">
    <source>
        <dbReference type="UniProtKB" id="P40487"/>
    </source>
</evidence>
<evidence type="ECO:0000256" key="3">
    <source>
        <dbReference type="SAM" id="MobiDB-lite"/>
    </source>
</evidence>
<evidence type="ECO:0000305" key="4"/>
<proteinExistence type="inferred from homology"/>
<name>DPH1_GIBZE</name>
<dbReference type="EC" id="2.5.1.108" evidence="2"/>
<dbReference type="EMBL" id="DS231663">
    <property type="protein sequence ID" value="ESU05843.1"/>
    <property type="molecule type" value="Genomic_DNA"/>
</dbReference>
<dbReference type="EMBL" id="HG970332">
    <property type="protein sequence ID" value="CEF72604.1"/>
    <property type="molecule type" value="Genomic_DNA"/>
</dbReference>
<dbReference type="RefSeq" id="XP_011316328.1">
    <property type="nucleotide sequence ID" value="XM_011318026.1"/>
</dbReference>
<dbReference type="SMR" id="Q4IQ72"/>
<dbReference type="FunCoup" id="Q4IQ72">
    <property type="interactions" value="641"/>
</dbReference>
<dbReference type="STRING" id="229533.Q4IQ72"/>
<dbReference type="GeneID" id="23548120"/>
<dbReference type="KEGG" id="fgr:FGSG_00636"/>
<dbReference type="VEuPathDB" id="FungiDB:FGRAMPH1_01G01607"/>
<dbReference type="eggNOG" id="KOG2648">
    <property type="taxonomic scope" value="Eukaryota"/>
</dbReference>
<dbReference type="HOGENOM" id="CLU_037146_1_1_1"/>
<dbReference type="InParanoid" id="Q4IQ72"/>
<dbReference type="OrthoDB" id="62413at110618"/>
<dbReference type="UniPathway" id="UPA00559"/>
<dbReference type="Proteomes" id="UP000070720">
    <property type="component" value="Chromosome 1"/>
</dbReference>
<dbReference type="GO" id="GO:0120513">
    <property type="term" value="C:2-(3-amino-3-carboxypropyl)histidine synthase complex"/>
    <property type="evidence" value="ECO:0000250"/>
    <property type="project" value="UniProtKB"/>
</dbReference>
<dbReference type="GO" id="GO:0005737">
    <property type="term" value="C:cytoplasm"/>
    <property type="evidence" value="ECO:0007669"/>
    <property type="project" value="UniProtKB-SubCell"/>
</dbReference>
<dbReference type="GO" id="GO:0090560">
    <property type="term" value="F:2-(3-amino-3-carboxypropyl)histidine synthase activity"/>
    <property type="evidence" value="ECO:0007669"/>
    <property type="project" value="UniProtKB-EC"/>
</dbReference>
<dbReference type="GO" id="GO:0051539">
    <property type="term" value="F:4 iron, 4 sulfur cluster binding"/>
    <property type="evidence" value="ECO:0000250"/>
    <property type="project" value="UniProtKB"/>
</dbReference>
<dbReference type="GO" id="GO:0046872">
    <property type="term" value="F:metal ion binding"/>
    <property type="evidence" value="ECO:0007669"/>
    <property type="project" value="UniProtKB-KW"/>
</dbReference>
<dbReference type="GO" id="GO:0017183">
    <property type="term" value="P:protein histidyl modification to diphthamide"/>
    <property type="evidence" value="ECO:0000250"/>
    <property type="project" value="UniProtKB"/>
</dbReference>
<dbReference type="FunFam" id="3.40.50.11840:FF:000001">
    <property type="entry name" value="2-(3-amino-3-carboxypropyl)histidine synthase subunit 1"/>
    <property type="match status" value="1"/>
</dbReference>
<dbReference type="FunFam" id="3.40.50.11850:FF:000001">
    <property type="entry name" value="2-(3-amino-3-carboxypropyl)histidine synthase subunit 1"/>
    <property type="match status" value="1"/>
</dbReference>
<dbReference type="FunFam" id="3.40.50.11860:FF:000002">
    <property type="entry name" value="2-(3-amino-3-carboxypropyl)histidine synthase subunit 1"/>
    <property type="match status" value="1"/>
</dbReference>
<dbReference type="Gene3D" id="3.40.50.11840">
    <property type="entry name" value="Diphthamide synthesis DPH1/DPH2 domain 1"/>
    <property type="match status" value="1"/>
</dbReference>
<dbReference type="Gene3D" id="3.40.50.11850">
    <property type="entry name" value="Diphthamide synthesis DPH1/DPH2 domain 2"/>
    <property type="match status" value="1"/>
</dbReference>
<dbReference type="Gene3D" id="3.40.50.11860">
    <property type="entry name" value="Diphthamide synthesis DPH1/DPH2 domain 3"/>
    <property type="match status" value="1"/>
</dbReference>
<dbReference type="InterPro" id="IPR016435">
    <property type="entry name" value="DPH1/DPH2"/>
</dbReference>
<dbReference type="InterPro" id="IPR042263">
    <property type="entry name" value="DPH1/DPH2_1"/>
</dbReference>
<dbReference type="InterPro" id="IPR042264">
    <property type="entry name" value="DPH1/DPH2_2"/>
</dbReference>
<dbReference type="InterPro" id="IPR042265">
    <property type="entry name" value="DPH1/DPH2_3"/>
</dbReference>
<dbReference type="NCBIfam" id="TIGR00322">
    <property type="entry name" value="diphth2_R"/>
    <property type="match status" value="1"/>
</dbReference>
<dbReference type="PANTHER" id="PTHR10762:SF1">
    <property type="entry name" value="2-(3-AMINO-3-CARBOXYPROPYL)HISTIDINE SYNTHASE SUBUNIT 1"/>
    <property type="match status" value="1"/>
</dbReference>
<dbReference type="PANTHER" id="PTHR10762">
    <property type="entry name" value="DIPHTHAMIDE BIOSYNTHESIS PROTEIN"/>
    <property type="match status" value="1"/>
</dbReference>
<dbReference type="Pfam" id="PF01866">
    <property type="entry name" value="Diphthamide_syn"/>
    <property type="match status" value="1"/>
</dbReference>
<dbReference type="SFLD" id="SFLDS00032">
    <property type="entry name" value="Radical_SAM_3-amino-3-carboxyp"/>
    <property type="match status" value="1"/>
</dbReference>
<reference key="1">
    <citation type="journal article" date="2007" name="Science">
        <title>The Fusarium graminearum genome reveals a link between localized polymorphism and pathogen specialization.</title>
        <authorList>
            <person name="Cuomo C.A."/>
            <person name="Gueldener U."/>
            <person name="Xu J.-R."/>
            <person name="Trail F."/>
            <person name="Turgeon B.G."/>
            <person name="Di Pietro A."/>
            <person name="Walton J.D."/>
            <person name="Ma L.-J."/>
            <person name="Baker S.E."/>
            <person name="Rep M."/>
            <person name="Adam G."/>
            <person name="Antoniw J."/>
            <person name="Baldwin T."/>
            <person name="Calvo S.E."/>
            <person name="Chang Y.-L."/>
            <person name="DeCaprio D."/>
            <person name="Gale L.R."/>
            <person name="Gnerre S."/>
            <person name="Goswami R.S."/>
            <person name="Hammond-Kosack K."/>
            <person name="Harris L.J."/>
            <person name="Hilburn K."/>
            <person name="Kennell J.C."/>
            <person name="Kroken S."/>
            <person name="Magnuson J.K."/>
            <person name="Mannhaupt G."/>
            <person name="Mauceli E.W."/>
            <person name="Mewes H.-W."/>
            <person name="Mitterbauer R."/>
            <person name="Muehlbauer G."/>
            <person name="Muensterkoetter M."/>
            <person name="Nelson D."/>
            <person name="O'Donnell K."/>
            <person name="Ouellet T."/>
            <person name="Qi W."/>
            <person name="Quesneville H."/>
            <person name="Roncero M.I.G."/>
            <person name="Seong K.-Y."/>
            <person name="Tetko I.V."/>
            <person name="Urban M."/>
            <person name="Waalwijk C."/>
            <person name="Ward T.J."/>
            <person name="Yao J."/>
            <person name="Birren B.W."/>
            <person name="Kistler H.C."/>
        </authorList>
    </citation>
    <scope>NUCLEOTIDE SEQUENCE [LARGE SCALE GENOMIC DNA]</scope>
    <source>
        <strain>ATCC MYA-4620 / CBS 123657 / FGSC 9075 / NRRL 31084 / PH-1</strain>
    </source>
</reference>
<reference key="2">
    <citation type="journal article" date="2010" name="Nature">
        <title>Comparative genomics reveals mobile pathogenicity chromosomes in Fusarium.</title>
        <authorList>
            <person name="Ma L.-J."/>
            <person name="van der Does H.C."/>
            <person name="Borkovich K.A."/>
            <person name="Coleman J.J."/>
            <person name="Daboussi M.-J."/>
            <person name="Di Pietro A."/>
            <person name="Dufresne M."/>
            <person name="Freitag M."/>
            <person name="Grabherr M."/>
            <person name="Henrissat B."/>
            <person name="Houterman P.M."/>
            <person name="Kang S."/>
            <person name="Shim W.-B."/>
            <person name="Woloshuk C."/>
            <person name="Xie X."/>
            <person name="Xu J.-R."/>
            <person name="Antoniw J."/>
            <person name="Baker S.E."/>
            <person name="Bluhm B.H."/>
            <person name="Breakspear A."/>
            <person name="Brown D.W."/>
            <person name="Butchko R.A.E."/>
            <person name="Chapman S."/>
            <person name="Coulson R."/>
            <person name="Coutinho P.M."/>
            <person name="Danchin E.G.J."/>
            <person name="Diener A."/>
            <person name="Gale L.R."/>
            <person name="Gardiner D.M."/>
            <person name="Goff S."/>
            <person name="Hammond-Kosack K.E."/>
            <person name="Hilburn K."/>
            <person name="Hua-Van A."/>
            <person name="Jonkers W."/>
            <person name="Kazan K."/>
            <person name="Kodira C.D."/>
            <person name="Koehrsen M."/>
            <person name="Kumar L."/>
            <person name="Lee Y.-H."/>
            <person name="Li L."/>
            <person name="Manners J.M."/>
            <person name="Miranda-Saavedra D."/>
            <person name="Mukherjee M."/>
            <person name="Park G."/>
            <person name="Park J."/>
            <person name="Park S.-Y."/>
            <person name="Proctor R.H."/>
            <person name="Regev A."/>
            <person name="Ruiz-Roldan M.C."/>
            <person name="Sain D."/>
            <person name="Sakthikumar S."/>
            <person name="Sykes S."/>
            <person name="Schwartz D.C."/>
            <person name="Turgeon B.G."/>
            <person name="Wapinski I."/>
            <person name="Yoder O."/>
            <person name="Young S."/>
            <person name="Zeng Q."/>
            <person name="Zhou S."/>
            <person name="Galagan J."/>
            <person name="Cuomo C.A."/>
            <person name="Kistler H.C."/>
            <person name="Rep M."/>
        </authorList>
    </citation>
    <scope>GENOME REANNOTATION</scope>
    <source>
        <strain>ATCC MYA-4620 / CBS 123657 / FGSC 9075 / NRRL 31084 / PH-1</strain>
    </source>
</reference>
<reference key="3">
    <citation type="journal article" date="2015" name="BMC Genomics">
        <title>The completed genome sequence of the pathogenic ascomycete fungus Fusarium graminearum.</title>
        <authorList>
            <person name="King R."/>
            <person name="Urban M."/>
            <person name="Hammond-Kosack M.C.U."/>
            <person name="Hassani-Pak K."/>
            <person name="Hammond-Kosack K.E."/>
        </authorList>
    </citation>
    <scope>NUCLEOTIDE SEQUENCE [LARGE SCALE GENOMIC DNA]</scope>
    <source>
        <strain>ATCC MYA-4620 / CBS 123657 / FGSC 9075 / NRRL 31084 / PH-1</strain>
    </source>
</reference>